<sequence length="500" mass="56889">MGEVVNLSLSQRANHVLTHLYNNQESHIPYKKNQPVNFFNNVFLSTSKTHTGHTNYAPRALVFDLRYGLGSLNKHEYHETPTNFDNIPQSDRFNLDKQIAKNQYQQNLDKGIASTEAESILSVENTKFWTDYNKLIYSPSSLNTLQNYDIGQSPEYGSHHNFPQIKFNTFEVGQKEFSDSTSNLDSQLDSFRRLLEQCDLLQGVNVVSELDSAWGGFTTSLLTEFIDEYFNGGISNTKNSIWIYGLHSQGPSGRSSINEAISRIKTTIELSKNSTLFFPINTAPFSKGIFSSDTIEDNILRGEHERKIVNDIKLKSIDSSKVTDINSLGSIISNVDISAYYNMSAPKPQDSSSGYIDLSVPTTVPTKTSSKVINEYFVKNYVIPTEQGKLEEKFAFKDKGIPSNVYRSRDITSIIKVDTFPYKIFNSQKQFNFYSEFNVSTDYRIELKAYKDLIKNVRLNSQQLMGIIEDKAELIEDISHILEHYTISNEPSDEESDDDY</sequence>
<name>DML1_PICST</name>
<feature type="chain" id="PRO_0000285340" description="Protein DML1">
    <location>
        <begin position="1"/>
        <end position="500"/>
    </location>
</feature>
<gene>
    <name type="primary">DML1</name>
    <name type="ORF">PICST_55456</name>
</gene>
<dbReference type="EMBL" id="CP000496">
    <property type="protein sequence ID" value="ABN65149.2"/>
    <property type="molecule type" value="Genomic_DNA"/>
</dbReference>
<dbReference type="RefSeq" id="XP_001383178.2">
    <property type="nucleotide sequence ID" value="XM_001383141.1"/>
</dbReference>
<dbReference type="FunCoup" id="A3LQ44">
    <property type="interactions" value="77"/>
</dbReference>
<dbReference type="STRING" id="322104.A3LQ44"/>
<dbReference type="GeneID" id="4837599"/>
<dbReference type="KEGG" id="pic:PICST_55456"/>
<dbReference type="eggNOG" id="KOG2530">
    <property type="taxonomic scope" value="Eukaryota"/>
</dbReference>
<dbReference type="HOGENOM" id="CLU_022511_2_1_1"/>
<dbReference type="InParanoid" id="A3LQ44"/>
<dbReference type="OMA" id="KHEYHET"/>
<dbReference type="OrthoDB" id="271881at2759"/>
<dbReference type="Proteomes" id="UP000002258">
    <property type="component" value="Chromosome 2"/>
</dbReference>
<dbReference type="GO" id="GO:0005739">
    <property type="term" value="C:mitochondrion"/>
    <property type="evidence" value="ECO:0007669"/>
    <property type="project" value="UniProtKB-SubCell"/>
</dbReference>
<dbReference type="GO" id="GO:0007005">
    <property type="term" value="P:mitochondrion organization"/>
    <property type="evidence" value="ECO:0007669"/>
    <property type="project" value="InterPro"/>
</dbReference>
<dbReference type="Gene3D" id="3.40.50.1440">
    <property type="entry name" value="Tubulin/FtsZ, GTPase domain"/>
    <property type="match status" value="1"/>
</dbReference>
<dbReference type="InterPro" id="IPR049942">
    <property type="entry name" value="DML1/Misato"/>
</dbReference>
<dbReference type="InterPro" id="IPR029209">
    <property type="entry name" value="DML1/Misato_tubulin"/>
</dbReference>
<dbReference type="InterPro" id="IPR019605">
    <property type="entry name" value="Misato_II_tubulin-like"/>
</dbReference>
<dbReference type="InterPro" id="IPR036525">
    <property type="entry name" value="Tubulin/FtsZ_GTPase_sf"/>
</dbReference>
<dbReference type="PANTHER" id="PTHR13391">
    <property type="entry name" value="MITOCHONDRIAL DISTRIBUTION REGULATOR MISATO"/>
    <property type="match status" value="1"/>
</dbReference>
<dbReference type="PANTHER" id="PTHR13391:SF0">
    <property type="entry name" value="PROTEIN MISATO HOMOLOG 1"/>
    <property type="match status" value="1"/>
</dbReference>
<dbReference type="Pfam" id="PF10644">
    <property type="entry name" value="Misat_Tub_SegII"/>
    <property type="match status" value="1"/>
</dbReference>
<dbReference type="Pfam" id="PF14881">
    <property type="entry name" value="Tubulin_3"/>
    <property type="match status" value="1"/>
</dbReference>
<dbReference type="SUPFAM" id="SSF52490">
    <property type="entry name" value="Tubulin nucleotide-binding domain-like"/>
    <property type="match status" value="1"/>
</dbReference>
<proteinExistence type="inferred from homology"/>
<comment type="function">
    <text evidence="1">Involved in the partitioning of the mitochondrial organelle and mitochondrial DNA (mtDNA) inheritance.</text>
</comment>
<comment type="subcellular location">
    <subcellularLocation>
        <location evidence="1">Mitochondrion</location>
    </subcellularLocation>
</comment>
<comment type="similarity">
    <text evidence="2">Belongs to the misato family.</text>
</comment>
<protein>
    <recommendedName>
        <fullName>Protein DML1</fullName>
    </recommendedName>
</protein>
<evidence type="ECO:0000250" key="1"/>
<evidence type="ECO:0000305" key="2"/>
<reference key="1">
    <citation type="journal article" date="2007" name="Nat. Biotechnol.">
        <title>Genome sequence of the lignocellulose-bioconverting and xylose-fermenting yeast Pichia stipitis.</title>
        <authorList>
            <person name="Jeffries T.W."/>
            <person name="Grigoriev I.V."/>
            <person name="Grimwood J."/>
            <person name="Laplaza J.M."/>
            <person name="Aerts A."/>
            <person name="Salamov A."/>
            <person name="Schmutz J."/>
            <person name="Lindquist E."/>
            <person name="Dehal P."/>
            <person name="Shapiro H."/>
            <person name="Jin Y.-S."/>
            <person name="Passoth V."/>
            <person name="Richardson P.M."/>
        </authorList>
    </citation>
    <scope>NUCLEOTIDE SEQUENCE [LARGE SCALE GENOMIC DNA]</scope>
    <source>
        <strain>ATCC 58785 / CBS 6054 / NBRC 10063 / NRRL Y-11545</strain>
    </source>
</reference>
<organism>
    <name type="scientific">Scheffersomyces stipitis (strain ATCC 58785 / CBS 6054 / NBRC 10063 / NRRL Y-11545)</name>
    <name type="common">Yeast</name>
    <name type="synonym">Pichia stipitis</name>
    <dbReference type="NCBI Taxonomy" id="322104"/>
    <lineage>
        <taxon>Eukaryota</taxon>
        <taxon>Fungi</taxon>
        <taxon>Dikarya</taxon>
        <taxon>Ascomycota</taxon>
        <taxon>Saccharomycotina</taxon>
        <taxon>Pichiomycetes</taxon>
        <taxon>Debaryomycetaceae</taxon>
        <taxon>Scheffersomyces</taxon>
    </lineage>
</organism>
<accession>A3LQ44</accession>
<keyword id="KW-0496">Mitochondrion</keyword>
<keyword id="KW-1185">Reference proteome</keyword>